<evidence type="ECO:0000255" key="1">
    <source>
        <dbReference type="HAMAP-Rule" id="MF_00531"/>
    </source>
</evidence>
<evidence type="ECO:0000305" key="2"/>
<organism>
    <name type="scientific">Phocaeicola vulgatus (strain ATCC 8482 / DSM 1447 / JCM 5826 / CCUG 4940 / NBRC 14291 / NCTC 11154)</name>
    <name type="common">Bacteroides vulgatus</name>
    <dbReference type="NCBI Taxonomy" id="435590"/>
    <lineage>
        <taxon>Bacteria</taxon>
        <taxon>Pseudomonadati</taxon>
        <taxon>Bacteroidota</taxon>
        <taxon>Bacteroidia</taxon>
        <taxon>Bacteroidales</taxon>
        <taxon>Bacteroidaceae</taxon>
        <taxon>Phocaeicola</taxon>
    </lineage>
</organism>
<protein>
    <recommendedName>
        <fullName evidence="1">Small ribosomal subunit protein uS19</fullName>
    </recommendedName>
    <alternativeName>
        <fullName evidence="2">30S ribosomal protein S19</fullName>
    </alternativeName>
</protein>
<reference key="1">
    <citation type="journal article" date="2007" name="PLoS Biol.">
        <title>Evolution of symbiotic bacteria in the distal human intestine.</title>
        <authorList>
            <person name="Xu J."/>
            <person name="Mahowald M.A."/>
            <person name="Ley R.E."/>
            <person name="Lozupone C.A."/>
            <person name="Hamady M."/>
            <person name="Martens E.C."/>
            <person name="Henrissat B."/>
            <person name="Coutinho P.M."/>
            <person name="Minx P."/>
            <person name="Latreille P."/>
            <person name="Cordum H."/>
            <person name="Van Brunt A."/>
            <person name="Kim K."/>
            <person name="Fulton R.S."/>
            <person name="Fulton L.A."/>
            <person name="Clifton S.W."/>
            <person name="Wilson R.K."/>
            <person name="Knight R.D."/>
            <person name="Gordon J.I."/>
        </authorList>
    </citation>
    <scope>NUCLEOTIDE SEQUENCE [LARGE SCALE GENOMIC DNA]</scope>
    <source>
        <strain>ATCC 8482 / DSM 1447 / JCM 5826 / CCUG 4940 / NBRC 14291 / NCTC 11154</strain>
    </source>
</reference>
<proteinExistence type="inferred from homology"/>
<keyword id="KW-0687">Ribonucleoprotein</keyword>
<keyword id="KW-0689">Ribosomal protein</keyword>
<keyword id="KW-0694">RNA-binding</keyword>
<keyword id="KW-0699">rRNA-binding</keyword>
<comment type="function">
    <text evidence="1">Protein S19 forms a complex with S13 that binds strongly to the 16S ribosomal RNA.</text>
</comment>
<comment type="similarity">
    <text evidence="1">Belongs to the universal ribosomal protein uS19 family.</text>
</comment>
<accession>A6KYJ1</accession>
<gene>
    <name evidence="1" type="primary">rpsS</name>
    <name type="ordered locus">BVU_0801</name>
</gene>
<feature type="chain" id="PRO_1000051014" description="Small ribosomal subunit protein uS19">
    <location>
        <begin position="1"/>
        <end position="89"/>
    </location>
</feature>
<sequence length="89" mass="9895">MSRSLKKGPYINVKLEKKVLAMNESGKKVVVKTWARASMISPDFVGHTVAVHNGNKFIPVYVTENMVGHKLGEFAPTRTFRGHAGNKKK</sequence>
<dbReference type="EMBL" id="CP000139">
    <property type="protein sequence ID" value="ABR38505.1"/>
    <property type="molecule type" value="Genomic_DNA"/>
</dbReference>
<dbReference type="RefSeq" id="WP_002558070.1">
    <property type="nucleotide sequence ID" value="NZ_JANSWM010000035.1"/>
</dbReference>
<dbReference type="SMR" id="A6KYJ1"/>
<dbReference type="STRING" id="435590.BVU_0801"/>
<dbReference type="PaxDb" id="435590-BVU_0801"/>
<dbReference type="GeneID" id="94548064"/>
<dbReference type="KEGG" id="bvu:BVU_0801"/>
<dbReference type="eggNOG" id="COG0185">
    <property type="taxonomic scope" value="Bacteria"/>
</dbReference>
<dbReference type="HOGENOM" id="CLU_144911_0_1_10"/>
<dbReference type="BioCyc" id="BVUL435590:G1G59-843-MONOMER"/>
<dbReference type="Proteomes" id="UP000002861">
    <property type="component" value="Chromosome"/>
</dbReference>
<dbReference type="GO" id="GO:0005737">
    <property type="term" value="C:cytoplasm"/>
    <property type="evidence" value="ECO:0007669"/>
    <property type="project" value="UniProtKB-ARBA"/>
</dbReference>
<dbReference type="GO" id="GO:0015935">
    <property type="term" value="C:small ribosomal subunit"/>
    <property type="evidence" value="ECO:0007669"/>
    <property type="project" value="InterPro"/>
</dbReference>
<dbReference type="GO" id="GO:0019843">
    <property type="term" value="F:rRNA binding"/>
    <property type="evidence" value="ECO:0007669"/>
    <property type="project" value="UniProtKB-UniRule"/>
</dbReference>
<dbReference type="GO" id="GO:0003735">
    <property type="term" value="F:structural constituent of ribosome"/>
    <property type="evidence" value="ECO:0007669"/>
    <property type="project" value="InterPro"/>
</dbReference>
<dbReference type="GO" id="GO:0000028">
    <property type="term" value="P:ribosomal small subunit assembly"/>
    <property type="evidence" value="ECO:0007669"/>
    <property type="project" value="TreeGrafter"/>
</dbReference>
<dbReference type="GO" id="GO:0006412">
    <property type="term" value="P:translation"/>
    <property type="evidence" value="ECO:0007669"/>
    <property type="project" value="UniProtKB-UniRule"/>
</dbReference>
<dbReference type="FunFam" id="3.30.860.10:FF:000001">
    <property type="entry name" value="30S ribosomal protein S19"/>
    <property type="match status" value="1"/>
</dbReference>
<dbReference type="Gene3D" id="3.30.860.10">
    <property type="entry name" value="30s Ribosomal Protein S19, Chain A"/>
    <property type="match status" value="1"/>
</dbReference>
<dbReference type="HAMAP" id="MF_00531">
    <property type="entry name" value="Ribosomal_uS19"/>
    <property type="match status" value="1"/>
</dbReference>
<dbReference type="InterPro" id="IPR002222">
    <property type="entry name" value="Ribosomal_uS19"/>
</dbReference>
<dbReference type="InterPro" id="IPR005732">
    <property type="entry name" value="Ribosomal_uS19_bac-type"/>
</dbReference>
<dbReference type="InterPro" id="IPR020934">
    <property type="entry name" value="Ribosomal_uS19_CS"/>
</dbReference>
<dbReference type="InterPro" id="IPR023575">
    <property type="entry name" value="Ribosomal_uS19_SF"/>
</dbReference>
<dbReference type="NCBIfam" id="TIGR01050">
    <property type="entry name" value="rpsS_bact"/>
    <property type="match status" value="1"/>
</dbReference>
<dbReference type="PANTHER" id="PTHR11880">
    <property type="entry name" value="RIBOSOMAL PROTEIN S19P FAMILY MEMBER"/>
    <property type="match status" value="1"/>
</dbReference>
<dbReference type="PANTHER" id="PTHR11880:SF8">
    <property type="entry name" value="SMALL RIBOSOMAL SUBUNIT PROTEIN US19M"/>
    <property type="match status" value="1"/>
</dbReference>
<dbReference type="Pfam" id="PF00203">
    <property type="entry name" value="Ribosomal_S19"/>
    <property type="match status" value="1"/>
</dbReference>
<dbReference type="PIRSF" id="PIRSF002144">
    <property type="entry name" value="Ribosomal_S19"/>
    <property type="match status" value="1"/>
</dbReference>
<dbReference type="PRINTS" id="PR00975">
    <property type="entry name" value="RIBOSOMALS19"/>
</dbReference>
<dbReference type="SUPFAM" id="SSF54570">
    <property type="entry name" value="Ribosomal protein S19"/>
    <property type="match status" value="1"/>
</dbReference>
<dbReference type="PROSITE" id="PS00323">
    <property type="entry name" value="RIBOSOMAL_S19"/>
    <property type="match status" value="1"/>
</dbReference>
<name>RS19_PHOV8</name>